<dbReference type="EMBL" id="AF220295">
    <property type="protein sequence ID" value="AAL40401.1"/>
    <property type="molecule type" value="Genomic_RNA"/>
</dbReference>
<dbReference type="EMBL" id="AF239312">
    <property type="protein sequence ID" value="AAG40606.1"/>
    <property type="molecule type" value="Genomic_RNA"/>
</dbReference>
<dbReference type="EMBL" id="AH010256">
    <property type="protein sequence ID" value="AAK01072.1"/>
    <property type="molecule type" value="Genomic_RNA"/>
</dbReference>
<dbReference type="EMBL" id="AH010061">
    <property type="protein sequence ID" value="AAG40596.1"/>
    <property type="molecule type" value="Genomic_RNA"/>
</dbReference>
<dbReference type="EMBL" id="AH010363">
    <property type="protein sequence ID" value="AAK01076.1"/>
    <property type="molecule type" value="Genomic_RNA"/>
</dbReference>
<dbReference type="EMBL" id="AH010062">
    <property type="protein sequence ID" value="AAG40602.1"/>
    <property type="molecule type" value="Genomic_RNA"/>
</dbReference>
<dbReference type="Proteomes" id="UP000008572">
    <property type="component" value="Genome"/>
</dbReference>
<dbReference type="InterPro" id="IPR009314">
    <property type="entry name" value="Corona_NS1"/>
</dbReference>
<dbReference type="Pfam" id="PF06145">
    <property type="entry name" value="Corona_NS1"/>
    <property type="match status" value="1"/>
</dbReference>
<organismHost>
    <name type="scientific">Bos taurus</name>
    <name type="common">Bovine</name>
    <dbReference type="NCBI Taxonomy" id="9913"/>
</organismHost>
<accession>Q77NC3</accession>
<accession>Q9DH48</accession>
<accession>Q9DH51</accession>
<protein>
    <recommendedName>
        <fullName>Non-structural protein of 4.9 kDa</fullName>
        <shortName>ns4.9</shortName>
    </recommendedName>
    <alternativeName>
        <fullName>4.9 kDa accessory protein</fullName>
    </alternativeName>
</protein>
<reference key="1">
    <citation type="journal article" date="2001" name="Adv. Exp. Med. Biol.">
        <title>Full-length genomic sequence of bovine coronavirus (31 kb). Completion of the open reading frame 1a/1b sequences.</title>
        <authorList>
            <person name="Yoo D."/>
            <person name="Pei Y."/>
        </authorList>
    </citation>
    <scope>NUCLEOTIDE SEQUENCE [GENOMIC RNA]</scope>
</reference>
<reference key="2">
    <citation type="journal article" date="2001" name="Virus Res.">
        <title>Bovine coronaviruses associated with enteric and respiratory diseases in Canadian dairy cattle display different reactivities to anti-HE monoclonal antibodies and distinct amino acid changes in their HE, S and ns4.9 protein.</title>
        <authorList>
            <person name="Gelinas A.-M."/>
            <person name="Boutin M."/>
            <person name="Sasseville A.M.-J."/>
            <person name="Dea S."/>
        </authorList>
    </citation>
    <scope>NUCLEOTIDE SEQUENCE [GENOMIC RNA]</scope>
    <source>
        <strain>Isolate BCQ.1523</strain>
        <strain>Isolate BCQ.2590</strain>
        <strain>Isolate BCQ.3994</strain>
        <strain>Isolate BCQ.571</strain>
        <strain>Isolate BCQ.7373</strain>
    </source>
</reference>
<evidence type="ECO:0000305" key="1"/>
<name>NS49_CVBQ</name>
<gene>
    <name type="ORF">4a</name>
</gene>
<proteinExistence type="inferred from homology"/>
<sequence length="43" mass="4911">MTTKFVFDLLAPDDILHPFNHVKLIIRPIEVEHIIIATTMPAV</sequence>
<organism>
    <name type="scientific">Bovine coronavirus (strain Quebec)</name>
    <name type="common">BCoV</name>
    <name type="synonym">BCV</name>
    <dbReference type="NCBI Taxonomy" id="11133"/>
    <lineage>
        <taxon>Viruses</taxon>
        <taxon>Riboviria</taxon>
        <taxon>Orthornavirae</taxon>
        <taxon>Pisuviricota</taxon>
        <taxon>Pisoniviricetes</taxon>
        <taxon>Nidovirales</taxon>
        <taxon>Cornidovirineae</taxon>
        <taxon>Coronaviridae</taxon>
        <taxon>Orthocoronavirinae</taxon>
        <taxon>Betacoronavirus</taxon>
        <taxon>Embecovirus</taxon>
        <taxon>Betacoronavirus 1</taxon>
    </lineage>
</organism>
<comment type="similarity">
    <text evidence="1">Belongs to the coronaviruses ns4.9 protein family.</text>
</comment>
<feature type="chain" id="PRO_0000283945" description="Non-structural protein of 4.9 kDa">
    <location>
        <begin position="1"/>
        <end position="43"/>
    </location>
</feature>
<feature type="sequence variant" description="In strain: Isolate BCQ.3994.">
    <original>T</original>
    <variation>K</variation>
    <location>
        <position position="2"/>
    </location>
</feature>
<feature type="sequence variant" description="In strain: Isolate BCQ.3994.">
    <original>F</original>
    <variation>S</variation>
    <location>
        <position position="19"/>
    </location>
</feature>
<feature type="sequence variant" description="In strain: Isolate BCQ.3994.">
    <original>K</original>
    <variation>N</variation>
    <location>
        <position position="23"/>
    </location>
</feature>
<feature type="sequence variant" description="In strain: Isolate BCQ.3994.">
    <original>P</original>
    <variation>L</variation>
    <location>
        <position position="28"/>
    </location>
</feature>
<feature type="sequence variant" description="In strain: Isolate BCQ.3994.">
    <location>
        <begin position="30"/>
        <end position="43"/>
    </location>
</feature>
<feature type="sequence variant" description="In strain: Isolate BCQ.571, Isolate BCQ.1523, Isolate BCQ.2590 and Isolate BCQ.7373.">
    <original>V</original>
    <variation>F</variation>
    <location>
        <position position="43"/>
    </location>
</feature>